<feature type="signal peptide" evidence="3">
    <location>
        <begin position="1"/>
        <end position="19"/>
    </location>
</feature>
<feature type="chain" id="PRO_0000023003" description="Phospholipase A2 inhibitor LNF2" evidence="6">
    <location>
        <begin position="20"/>
        <end position="200"/>
    </location>
</feature>
<feature type="glycosylation site" description="N-linked (GlcNAc...) asparagine" evidence="3">
    <location>
        <position position="176"/>
    </location>
</feature>
<feature type="disulfide bond" evidence="1">
    <location>
        <begin position="22"/>
        <end position="46"/>
    </location>
</feature>
<feature type="disulfide bond" evidence="1">
    <location>
        <begin position="25"/>
        <end position="32"/>
    </location>
</feature>
<feature type="disulfide bond" evidence="1">
    <location>
        <begin position="39"/>
        <end position="67"/>
    </location>
</feature>
<feature type="disulfide bond" evidence="1">
    <location>
        <begin position="73"/>
        <end position="94"/>
    </location>
</feature>
<feature type="disulfide bond" evidence="1">
    <location>
        <begin position="95"/>
        <end position="100"/>
    </location>
</feature>
<feature type="disulfide bond" evidence="1">
    <location>
        <begin position="118"/>
        <end position="143"/>
    </location>
</feature>
<feature type="disulfide bond" evidence="1">
    <location>
        <begin position="136"/>
        <end position="165"/>
    </location>
</feature>
<feature type="disulfide bond" evidence="1">
    <location>
        <begin position="169"/>
        <end position="191"/>
    </location>
</feature>
<reference key="1">
    <citation type="journal article" date="2003" name="Toxicon">
        <title>Molecular cloning of a gamma-phospholipase A2 inhibitor from Lachesis muta muta (the bushmaster snake).</title>
        <authorList>
            <person name="Fortes-Dias C.L."/>
            <person name="Barcellos C.J."/>
            <person name="Estevao-Costa M.I."/>
        </authorList>
    </citation>
    <scope>NUCLEOTIDE SEQUENCE [MRNA]</scope>
    <source>
        <tissue>Liver</tissue>
    </source>
</reference>
<keyword id="KW-1015">Disulfide bond</keyword>
<keyword id="KW-0325">Glycoprotein</keyword>
<keyword id="KW-0593">Phospholipase A2 inhibitor</keyword>
<keyword id="KW-0964">Secreted</keyword>
<keyword id="KW-0732">Signal</keyword>
<accession>P60592</accession>
<evidence type="ECO:0000250" key="1">
    <source>
        <dbReference type="UniProtKB" id="Q7LZI1"/>
    </source>
</evidence>
<evidence type="ECO:0000250" key="2">
    <source>
        <dbReference type="UniProtKB" id="Q90358"/>
    </source>
</evidence>
<evidence type="ECO:0000255" key="3"/>
<evidence type="ECO:0000303" key="4">
    <source>
    </source>
</evidence>
<evidence type="ECO:0000305" key="5"/>
<evidence type="ECO:0000305" key="6">
    <source>
    </source>
</evidence>
<comment type="function">
    <text>Inhibits the enzymatic activity of phospholipase A2 (PA2).</text>
</comment>
<comment type="subunit">
    <text evidence="2">Occurs as a mixture of oligomers. Tetrameric arrangement appears to be the predominant quaternary structure.</text>
</comment>
<comment type="subcellular location">
    <subcellularLocation>
        <location evidence="6">Secreted</location>
    </subcellularLocation>
    <text evidence="6">Secreted in blood plasma.</text>
</comment>
<comment type="tissue specificity">
    <text evidence="6">Expressed by the liver.</text>
</comment>
<comment type="similarity">
    <text evidence="5">Belongs to the CNF-like-inhibitor family.</text>
</comment>
<name>PLIG2_LACMU</name>
<dbReference type="EMBL" id="AY425346">
    <property type="protein sequence ID" value="AAR04437.1"/>
    <property type="molecule type" value="mRNA"/>
</dbReference>
<dbReference type="SMR" id="P60592"/>
<dbReference type="GO" id="GO:0005576">
    <property type="term" value="C:extracellular region"/>
    <property type="evidence" value="ECO:0007669"/>
    <property type="project" value="UniProtKB-SubCell"/>
</dbReference>
<dbReference type="GO" id="GO:0019834">
    <property type="term" value="F:phospholipase A2 inhibitor activity"/>
    <property type="evidence" value="ECO:0007669"/>
    <property type="project" value="UniProtKB-KW"/>
</dbReference>
<dbReference type="CDD" id="cd23629">
    <property type="entry name" value="TFP_LU_ECD_PLIGA"/>
    <property type="match status" value="1"/>
</dbReference>
<dbReference type="Gene3D" id="2.10.60.10">
    <property type="entry name" value="CD59"/>
    <property type="match status" value="1"/>
</dbReference>
<dbReference type="InterPro" id="IPR050918">
    <property type="entry name" value="CNF-like_PLA2_Inhibitor"/>
</dbReference>
<dbReference type="InterPro" id="IPR016054">
    <property type="entry name" value="LY6_UPA_recep-like"/>
</dbReference>
<dbReference type="InterPro" id="IPR016338">
    <property type="entry name" value="PLipase_A2-inh_b-type"/>
</dbReference>
<dbReference type="InterPro" id="IPR004126">
    <property type="entry name" value="PLipase_A2_inh_N"/>
</dbReference>
<dbReference type="InterPro" id="IPR045860">
    <property type="entry name" value="Snake_toxin-like_sf"/>
</dbReference>
<dbReference type="PANTHER" id="PTHR20914">
    <property type="entry name" value="LY6/PLAUR DOMAIN-CONTAINING PROTEIN 8"/>
    <property type="match status" value="1"/>
</dbReference>
<dbReference type="PANTHER" id="PTHR20914:SF30">
    <property type="entry name" value="LY6_PLAUR DOMAIN CONTAINING 9"/>
    <property type="match status" value="1"/>
</dbReference>
<dbReference type="Pfam" id="PF02988">
    <property type="entry name" value="PLA2_inh"/>
    <property type="match status" value="1"/>
</dbReference>
<dbReference type="PIRSF" id="PIRSF002023">
    <property type="entry name" value="PLA2_inhib_alpha/gamma"/>
    <property type="match status" value="1"/>
</dbReference>
<dbReference type="SMART" id="SM00134">
    <property type="entry name" value="LU"/>
    <property type="match status" value="1"/>
</dbReference>
<dbReference type="SUPFAM" id="SSF57302">
    <property type="entry name" value="Snake toxin-like"/>
    <property type="match status" value="2"/>
</dbReference>
<proteinExistence type="evidence at transcript level"/>
<protein>
    <recommendedName>
        <fullName evidence="4">Phospholipase A2 inhibitor LNF2</fullName>
    </recommendedName>
    <alternativeName>
        <fullName evidence="5">Lachesis neutralizing factor 2</fullName>
    </alternativeName>
    <alternativeName>
        <fullName>gamma-PLI</fullName>
    </alternativeName>
</protein>
<sequence length="200" mass="22207">MKSLHTICLLFIFVARGNSRSCDFCHNIGKDCDGYEQECSSPEDVCGKVFLEISSASLSVRTVHKNCFSSSICKLGQIDVNIGHHSYIRGRVNCCEKEPCEDQPFPGLPLSRPNGYYCPGALGLFTEDSTEYEAICHGTETKCINIVGHRYENFPGDITYNLKGCVSSCPLLSLSNATREENRNYLQKVECKDAIRLASL</sequence>
<organism>
    <name type="scientific">Lachesis muta muta</name>
    <name type="common">Bushmaster</name>
    <dbReference type="NCBI Taxonomy" id="8753"/>
    <lineage>
        <taxon>Eukaryota</taxon>
        <taxon>Metazoa</taxon>
        <taxon>Chordata</taxon>
        <taxon>Craniata</taxon>
        <taxon>Vertebrata</taxon>
        <taxon>Euteleostomi</taxon>
        <taxon>Lepidosauria</taxon>
        <taxon>Squamata</taxon>
        <taxon>Bifurcata</taxon>
        <taxon>Unidentata</taxon>
        <taxon>Episquamata</taxon>
        <taxon>Toxicofera</taxon>
        <taxon>Serpentes</taxon>
        <taxon>Colubroidea</taxon>
        <taxon>Viperidae</taxon>
        <taxon>Crotalinae</taxon>
        <taxon>Lachesis</taxon>
    </lineage>
</organism>